<comment type="function">
    <text evidence="2">Catalyzes the NAD-dependent dehydrogenation (oxidation) of a broad array of hydroxylated polyunsaturated fatty acids (mainly eicosanoids and docosanoids, including prostaglandins, lipoxins and resolvins), yielding their corresponding keto (oxo) metabolites. Decreases the levels of the pro-proliferative prostaglandins such as prostaglandin E2 (whose activity is increased in cancer because of an increase in the expression of cyclooxygenase 2) and generates oxo-fatty acid products that can profoundly influence cell function by abrogating pro-inflammatory cytokine expression. Converts resolvins E1, D1 and D2 to their oxo products, which represents a mode of resolvin inactivation. Resolvin E1 plays important roles during the resolution phase of acute inflammation, while resolvins D1 and D2 have a unique role in obesity-induced adipose inflammation.</text>
</comment>
<comment type="catalytic activity">
    <reaction evidence="2">
        <text>prostaglandin E2 + NAD(+) = 15-oxoprostaglandin E2 + NADH + H(+)</text>
        <dbReference type="Rhea" id="RHEA:11876"/>
        <dbReference type="ChEBI" id="CHEBI:15378"/>
        <dbReference type="ChEBI" id="CHEBI:57400"/>
        <dbReference type="ChEBI" id="CHEBI:57540"/>
        <dbReference type="ChEBI" id="CHEBI:57945"/>
        <dbReference type="ChEBI" id="CHEBI:606564"/>
        <dbReference type="EC" id="1.1.1.141"/>
    </reaction>
    <physiologicalReaction direction="left-to-right" evidence="2">
        <dbReference type="Rhea" id="RHEA:11877"/>
    </physiologicalReaction>
</comment>
<comment type="catalytic activity">
    <reaction evidence="2">
        <text>(15S)-hydroxy-(5Z,8Z,11Z,13E)-eicosatetraenoate + NAD(+) = 15-oxo-(5Z,8Z,11Z,13E)-eicosatetraenoate + NADH + H(+)</text>
        <dbReference type="Rhea" id="RHEA:23260"/>
        <dbReference type="ChEBI" id="CHEBI:15378"/>
        <dbReference type="ChEBI" id="CHEBI:57409"/>
        <dbReference type="ChEBI" id="CHEBI:57410"/>
        <dbReference type="ChEBI" id="CHEBI:57540"/>
        <dbReference type="ChEBI" id="CHEBI:57945"/>
        <dbReference type="EC" id="1.1.1.232"/>
    </reaction>
    <physiologicalReaction direction="left-to-right" evidence="2">
        <dbReference type="Rhea" id="RHEA:23261"/>
    </physiologicalReaction>
</comment>
<comment type="catalytic activity">
    <reaction evidence="2">
        <text>(11R)-hydroxy-(5Z,8Z,12E,14Z)-eicosatetraenoate + NAD(+) = 11-oxo-(5Z,8Z,12E,14Z)-eicosatetraenoate + NADH + H(+)</text>
        <dbReference type="Rhea" id="RHEA:48640"/>
        <dbReference type="ChEBI" id="CHEBI:15378"/>
        <dbReference type="ChEBI" id="CHEBI:57540"/>
        <dbReference type="ChEBI" id="CHEBI:57945"/>
        <dbReference type="ChEBI" id="CHEBI:78836"/>
        <dbReference type="ChEBI" id="CHEBI:90697"/>
    </reaction>
    <physiologicalReaction direction="left-to-right" evidence="2">
        <dbReference type="Rhea" id="RHEA:48641"/>
    </physiologicalReaction>
</comment>
<comment type="catalytic activity">
    <reaction evidence="2">
        <text>lipoxin A4 + NAD(+) = 15-oxo-(5S,6R)-dihydroxy-(7E,9E,11Z,13E)-eicosatetraenoate + NADH + H(+)</text>
        <dbReference type="Rhea" id="RHEA:41572"/>
        <dbReference type="ChEBI" id="CHEBI:15378"/>
        <dbReference type="ChEBI" id="CHEBI:57540"/>
        <dbReference type="ChEBI" id="CHEBI:57945"/>
        <dbReference type="ChEBI" id="CHEBI:67026"/>
        <dbReference type="ChEBI" id="CHEBI:78311"/>
    </reaction>
    <physiologicalReaction direction="left-to-right" evidence="2">
        <dbReference type="Rhea" id="RHEA:41573"/>
    </physiologicalReaction>
</comment>
<comment type="catalytic activity">
    <reaction evidence="2">
        <text>15-oxo-(5S,6R)-dihydroxy-(7E,9E,11Z)-eicosatrienoate + NADH + H(+) = (5S,6R,15S)-trihydroxy-(7E,9E,11Z)-eicosatrienoate + NAD(+)</text>
        <dbReference type="Rhea" id="RHEA:41596"/>
        <dbReference type="ChEBI" id="CHEBI:15378"/>
        <dbReference type="ChEBI" id="CHEBI:57540"/>
        <dbReference type="ChEBI" id="CHEBI:57945"/>
        <dbReference type="ChEBI" id="CHEBI:78325"/>
        <dbReference type="ChEBI" id="CHEBI:78329"/>
    </reaction>
    <physiologicalReaction direction="left-to-right" evidence="2">
        <dbReference type="Rhea" id="RHEA:41597"/>
    </physiologicalReaction>
</comment>
<comment type="catalytic activity">
    <reaction evidence="2">
        <text>prostaglandin A1 + NAD(+) = 15-oxo-prostaglandin A1 + NADH + H(+)</text>
        <dbReference type="Rhea" id="RHEA:41263"/>
        <dbReference type="ChEBI" id="CHEBI:15378"/>
        <dbReference type="ChEBI" id="CHEBI:57398"/>
        <dbReference type="ChEBI" id="CHEBI:57540"/>
        <dbReference type="ChEBI" id="CHEBI:57945"/>
        <dbReference type="ChEBI" id="CHEBI:85072"/>
    </reaction>
    <physiologicalReaction direction="left-to-right" evidence="2">
        <dbReference type="Rhea" id="RHEA:41264"/>
    </physiologicalReaction>
</comment>
<comment type="catalytic activity">
    <reaction evidence="2">
        <text>prostaglandin E1 + NAD(+) = 15-oxoprostaglandin E1 + NADH + H(+)</text>
        <dbReference type="Rhea" id="RHEA:16477"/>
        <dbReference type="ChEBI" id="CHEBI:15378"/>
        <dbReference type="ChEBI" id="CHEBI:57397"/>
        <dbReference type="ChEBI" id="CHEBI:57401"/>
        <dbReference type="ChEBI" id="CHEBI:57540"/>
        <dbReference type="ChEBI" id="CHEBI:57945"/>
    </reaction>
    <physiologicalReaction direction="left-to-right" evidence="2">
        <dbReference type="Rhea" id="RHEA:16478"/>
    </physiologicalReaction>
</comment>
<comment type="catalytic activity">
    <reaction evidence="2">
        <text>14-hydroxy-(4Z,7Z,10Z,12E,16Z,19Z)-docosahexaenoate + NAD(+) = 14-oxo-(4Z,7Z,10Z,12E,16Z,19Z)-docosahexaenoate + NADH + H(+)</text>
        <dbReference type="Rhea" id="RHEA:48952"/>
        <dbReference type="ChEBI" id="CHEBI:15378"/>
        <dbReference type="ChEBI" id="CHEBI:57540"/>
        <dbReference type="ChEBI" id="CHEBI:57945"/>
        <dbReference type="ChEBI" id="CHEBI:90866"/>
        <dbReference type="ChEBI" id="CHEBI:90867"/>
    </reaction>
    <physiologicalReaction direction="left-to-right" evidence="2">
        <dbReference type="Rhea" id="RHEA:48953"/>
    </physiologicalReaction>
</comment>
<comment type="catalytic activity">
    <reaction evidence="2">
        <text>resolvin E1 + NAD(+) = 18-oxo-resolvin E1 + NADH + H(+)</text>
        <dbReference type="Rhea" id="RHEA:49244"/>
        <dbReference type="ChEBI" id="CHEBI:15378"/>
        <dbReference type="ChEBI" id="CHEBI:57540"/>
        <dbReference type="ChEBI" id="CHEBI:57945"/>
        <dbReference type="ChEBI" id="CHEBI:91000"/>
        <dbReference type="ChEBI" id="CHEBI:91001"/>
    </reaction>
    <physiologicalReaction direction="left-to-right" evidence="2">
        <dbReference type="Rhea" id="RHEA:49245"/>
    </physiologicalReaction>
</comment>
<comment type="catalytic activity">
    <reaction evidence="2">
        <text>resolvin D1 + NAD(+) = 8-oxoresolvin D1 + NADH + H(+)</text>
        <dbReference type="Rhea" id="RHEA:50124"/>
        <dbReference type="ChEBI" id="CHEBI:15378"/>
        <dbReference type="ChEBI" id="CHEBI:57540"/>
        <dbReference type="ChEBI" id="CHEBI:57945"/>
        <dbReference type="ChEBI" id="CHEBI:132079"/>
        <dbReference type="ChEBI" id="CHEBI:132080"/>
    </reaction>
    <physiologicalReaction direction="left-to-right" evidence="2">
        <dbReference type="Rhea" id="RHEA:50125"/>
    </physiologicalReaction>
</comment>
<comment type="catalytic activity">
    <reaction evidence="2">
        <text>resolvin D1 + NAD(+) = 17-oxoresolvin D1 + NADH + H(+)</text>
        <dbReference type="Rhea" id="RHEA:50128"/>
        <dbReference type="ChEBI" id="CHEBI:15378"/>
        <dbReference type="ChEBI" id="CHEBI:57540"/>
        <dbReference type="ChEBI" id="CHEBI:57945"/>
        <dbReference type="ChEBI" id="CHEBI:132079"/>
        <dbReference type="ChEBI" id="CHEBI:132081"/>
    </reaction>
    <physiologicalReaction direction="left-to-right" evidence="2">
        <dbReference type="Rhea" id="RHEA:50129"/>
    </physiologicalReaction>
</comment>
<comment type="catalytic activity">
    <reaction evidence="2">
        <text>resolvin D2 + NAD(+) = 7-oxoresolvin D2 + NADH + H(+)</text>
        <dbReference type="Rhea" id="RHEA:53584"/>
        <dbReference type="ChEBI" id="CHEBI:15378"/>
        <dbReference type="ChEBI" id="CHEBI:57540"/>
        <dbReference type="ChEBI" id="CHEBI:57945"/>
        <dbReference type="ChEBI" id="CHEBI:133367"/>
        <dbReference type="ChEBI" id="CHEBI:137497"/>
    </reaction>
    <physiologicalReaction direction="left-to-right" evidence="2">
        <dbReference type="Rhea" id="RHEA:53585"/>
    </physiologicalReaction>
</comment>
<comment type="catalytic activity">
    <reaction evidence="2">
        <text>resolvin D2 + NAD(+) = 16-oxoresolvin D2 + NADH + H(+)</text>
        <dbReference type="Rhea" id="RHEA:53588"/>
        <dbReference type="ChEBI" id="CHEBI:15378"/>
        <dbReference type="ChEBI" id="CHEBI:57540"/>
        <dbReference type="ChEBI" id="CHEBI:57945"/>
        <dbReference type="ChEBI" id="CHEBI:133367"/>
        <dbReference type="ChEBI" id="CHEBI:137498"/>
    </reaction>
    <physiologicalReaction direction="left-to-right" evidence="2">
        <dbReference type="Rhea" id="RHEA:53589"/>
    </physiologicalReaction>
</comment>
<comment type="subunit">
    <text evidence="1">Homodimer.</text>
</comment>
<comment type="subcellular location">
    <subcellularLocation>
        <location evidence="1">Cytoplasm</location>
    </subcellularLocation>
</comment>
<comment type="similarity">
    <text evidence="4">Belongs to the short-chain dehydrogenases/reductases (SDR) family.</text>
</comment>
<dbReference type="EC" id="1.1.1.141" evidence="2"/>
<dbReference type="EC" id="1.1.1.-" evidence="2"/>
<dbReference type="EC" id="1.1.1.232" evidence="2"/>
<dbReference type="EMBL" id="BC102458">
    <property type="protein sequence ID" value="AAI02459.1"/>
    <property type="molecule type" value="mRNA"/>
</dbReference>
<dbReference type="RefSeq" id="NP_001029591.1">
    <property type="nucleotide sequence ID" value="NM_001034419.2"/>
</dbReference>
<dbReference type="SMR" id="Q3T0C2"/>
<dbReference type="FunCoup" id="Q3T0C2">
    <property type="interactions" value="395"/>
</dbReference>
<dbReference type="STRING" id="9913.ENSBTAP00000027024"/>
<dbReference type="PaxDb" id="9913-ENSBTAP00000027024"/>
<dbReference type="GeneID" id="512259"/>
<dbReference type="KEGG" id="bta:512259"/>
<dbReference type="CTD" id="3248"/>
<dbReference type="eggNOG" id="KOG4169">
    <property type="taxonomic scope" value="Eukaryota"/>
</dbReference>
<dbReference type="InParanoid" id="Q3T0C2"/>
<dbReference type="OrthoDB" id="37659at2759"/>
<dbReference type="Proteomes" id="UP000009136">
    <property type="component" value="Unplaced"/>
</dbReference>
<dbReference type="GO" id="GO:0005737">
    <property type="term" value="C:cytoplasm"/>
    <property type="evidence" value="ECO:0000318"/>
    <property type="project" value="GO_Central"/>
</dbReference>
<dbReference type="GO" id="GO:0016404">
    <property type="term" value="F:15-hydroxyprostaglandin dehydrogenase (NAD+) activity"/>
    <property type="evidence" value="ECO:0000314"/>
    <property type="project" value="UniProtKB"/>
</dbReference>
<dbReference type="GO" id="GO:0051287">
    <property type="term" value="F:NAD binding"/>
    <property type="evidence" value="ECO:0000250"/>
    <property type="project" value="UniProtKB"/>
</dbReference>
<dbReference type="GO" id="GO:0070403">
    <property type="term" value="F:NAD+ binding"/>
    <property type="evidence" value="ECO:0000250"/>
    <property type="project" value="UniProtKB"/>
</dbReference>
<dbReference type="GO" id="GO:0004957">
    <property type="term" value="F:prostaglandin E receptor activity"/>
    <property type="evidence" value="ECO:0000250"/>
    <property type="project" value="UniProtKB"/>
</dbReference>
<dbReference type="GO" id="GO:0097070">
    <property type="term" value="P:ductus arteriosus closure"/>
    <property type="evidence" value="ECO:0000250"/>
    <property type="project" value="UniProtKB"/>
</dbReference>
<dbReference type="GO" id="GO:0007565">
    <property type="term" value="P:female pregnancy"/>
    <property type="evidence" value="ECO:0000250"/>
    <property type="project" value="UniProtKB"/>
</dbReference>
<dbReference type="GO" id="GO:0045786">
    <property type="term" value="P:negative regulation of cell cycle"/>
    <property type="evidence" value="ECO:0000250"/>
    <property type="project" value="UniProtKB"/>
</dbReference>
<dbReference type="GO" id="GO:0030728">
    <property type="term" value="P:ovulation"/>
    <property type="evidence" value="ECO:0000250"/>
    <property type="project" value="UniProtKB"/>
</dbReference>
<dbReference type="GO" id="GO:0007567">
    <property type="term" value="P:parturition"/>
    <property type="evidence" value="ECO:0000250"/>
    <property type="project" value="UniProtKB"/>
</dbReference>
<dbReference type="GO" id="GO:0006693">
    <property type="term" value="P:prostaglandin metabolic process"/>
    <property type="evidence" value="ECO:0000314"/>
    <property type="project" value="UniProtKB"/>
</dbReference>
<dbReference type="GO" id="GO:1905828">
    <property type="term" value="P:regulation of prostaglandin catabolic process"/>
    <property type="evidence" value="ECO:0000250"/>
    <property type="project" value="UniProtKB"/>
</dbReference>
<dbReference type="GO" id="GO:0070493">
    <property type="term" value="P:thrombin-activated receptor signaling pathway"/>
    <property type="evidence" value="ECO:0000250"/>
    <property type="project" value="UniProtKB"/>
</dbReference>
<dbReference type="GO" id="GO:0007179">
    <property type="term" value="P:transforming growth factor beta receptor signaling pathway"/>
    <property type="evidence" value="ECO:0000250"/>
    <property type="project" value="UniProtKB"/>
</dbReference>
<dbReference type="CDD" id="cd05323">
    <property type="entry name" value="ADH_SDR_c_like"/>
    <property type="match status" value="1"/>
</dbReference>
<dbReference type="FunFam" id="3.40.50.720:FF:000149">
    <property type="entry name" value="15-hydroxyprostaglandin dehydrogenase [NAD(+)]"/>
    <property type="match status" value="1"/>
</dbReference>
<dbReference type="Gene3D" id="3.40.50.720">
    <property type="entry name" value="NAD(P)-binding Rossmann-like Domain"/>
    <property type="match status" value="1"/>
</dbReference>
<dbReference type="InterPro" id="IPR036291">
    <property type="entry name" value="NAD(P)-bd_dom_sf"/>
</dbReference>
<dbReference type="InterPro" id="IPR020904">
    <property type="entry name" value="Sc_DH/Rdtase_CS"/>
</dbReference>
<dbReference type="InterPro" id="IPR002347">
    <property type="entry name" value="SDR_fam"/>
</dbReference>
<dbReference type="PANTHER" id="PTHR44229">
    <property type="entry name" value="15-HYDROXYPROSTAGLANDIN DEHYDROGENASE [NAD(+)]"/>
    <property type="match status" value="1"/>
</dbReference>
<dbReference type="PANTHER" id="PTHR44229:SF4">
    <property type="entry name" value="15-HYDROXYPROSTAGLANDIN DEHYDROGENASE [NAD(+)]"/>
    <property type="match status" value="1"/>
</dbReference>
<dbReference type="Pfam" id="PF00106">
    <property type="entry name" value="adh_short"/>
    <property type="match status" value="1"/>
</dbReference>
<dbReference type="PRINTS" id="PR00081">
    <property type="entry name" value="GDHRDH"/>
</dbReference>
<dbReference type="PRINTS" id="PR00080">
    <property type="entry name" value="SDRFAMILY"/>
</dbReference>
<dbReference type="SUPFAM" id="SSF51735">
    <property type="entry name" value="NAD(P)-binding Rossmann-fold domains"/>
    <property type="match status" value="1"/>
</dbReference>
<dbReference type="PROSITE" id="PS00061">
    <property type="entry name" value="ADH_SHORT"/>
    <property type="match status" value="1"/>
</dbReference>
<evidence type="ECO:0000250" key="1"/>
<evidence type="ECO:0000250" key="2">
    <source>
        <dbReference type="UniProtKB" id="P15428"/>
    </source>
</evidence>
<evidence type="ECO:0000255" key="3">
    <source>
        <dbReference type="PROSITE-ProRule" id="PRU10001"/>
    </source>
</evidence>
<evidence type="ECO:0000305" key="4"/>
<proteinExistence type="evidence at transcript level"/>
<reference key="1">
    <citation type="submission" date="2005-08" db="EMBL/GenBank/DDBJ databases">
        <authorList>
            <consortium name="NIH - Mammalian Gene Collection (MGC) project"/>
        </authorList>
    </citation>
    <scope>NUCLEOTIDE SEQUENCE [LARGE SCALE MRNA]</scope>
    <source>
        <strain>Crossbred X Angus</strain>
        <tissue>Ileum</tissue>
    </source>
</reference>
<sequence length="266" mass="29026">MHVNGKVALVTGAAQGIGRAFAEALLLKGAKVALVDWNLEAGVKCKAALDEQFEPQKTLFIQCDVADQEQLRDTFRKVVDHFGKLDILVNNAGVNNEKNWEKTLQINLVSVISGTYLGLDYMSKQNGGEGGININMSSLAGLMPVAQQPVYCASKHGIVGFTRSAAMAANLMNSGVRLNAICPGFVDTPILKSIEKEENMGKYIEYMGPIKDMMKYYGILDPSMIANGLITLIEDDALNGAIMKITTSKGIHFQDYDTTPFHMKMQ</sequence>
<name>PGDH_BOVIN</name>
<gene>
    <name type="primary">HPGD</name>
    <name type="synonym">PGDH1</name>
</gene>
<keyword id="KW-0963">Cytoplasm</keyword>
<keyword id="KW-0276">Fatty acid metabolism</keyword>
<keyword id="KW-0443">Lipid metabolism</keyword>
<keyword id="KW-0520">NAD</keyword>
<keyword id="KW-0560">Oxidoreductase</keyword>
<keyword id="KW-0644">Prostaglandin metabolism</keyword>
<keyword id="KW-1185">Reference proteome</keyword>
<keyword id="KW-0043">Tumor suppressor</keyword>
<organism>
    <name type="scientific">Bos taurus</name>
    <name type="common">Bovine</name>
    <dbReference type="NCBI Taxonomy" id="9913"/>
    <lineage>
        <taxon>Eukaryota</taxon>
        <taxon>Metazoa</taxon>
        <taxon>Chordata</taxon>
        <taxon>Craniata</taxon>
        <taxon>Vertebrata</taxon>
        <taxon>Euteleostomi</taxon>
        <taxon>Mammalia</taxon>
        <taxon>Eutheria</taxon>
        <taxon>Laurasiatheria</taxon>
        <taxon>Artiodactyla</taxon>
        <taxon>Ruminantia</taxon>
        <taxon>Pecora</taxon>
        <taxon>Bovidae</taxon>
        <taxon>Bovinae</taxon>
        <taxon>Bos</taxon>
    </lineage>
</organism>
<protein>
    <recommendedName>
        <fullName>15-hydroxyprostaglandin dehydrogenase [NAD(+)]</fullName>
        <shortName>15-PGDH</shortName>
        <ecNumber evidence="2">1.1.1.141</ecNumber>
    </recommendedName>
    <alternativeName>
        <fullName>Eicosanoid/docosanoid dehydrogenase [NAD(+)]</fullName>
        <ecNumber evidence="2">1.1.1.-</ecNumber>
        <ecNumber evidence="2">1.1.1.232</ecNumber>
    </alternativeName>
    <alternativeName>
        <fullName>Prostaglandin dehydrogenase 1</fullName>
    </alternativeName>
</protein>
<feature type="chain" id="PRO_0000240130" description="15-hydroxyprostaglandin dehydrogenase [NAD(+)]">
    <location>
        <begin position="1"/>
        <end position="266"/>
    </location>
</feature>
<feature type="active site" description="Proton acceptor" evidence="3">
    <location>
        <position position="151"/>
    </location>
</feature>
<feature type="binding site" evidence="1">
    <location>
        <begin position="12"/>
        <end position="20"/>
    </location>
    <ligand>
        <name>NAD(+)</name>
        <dbReference type="ChEBI" id="CHEBI:57540"/>
    </ligand>
</feature>
<feature type="binding site" evidence="1">
    <location>
        <begin position="36"/>
        <end position="37"/>
    </location>
    <ligand>
        <name>NAD(+)</name>
        <dbReference type="ChEBI" id="CHEBI:57540"/>
    </ligand>
</feature>
<feature type="binding site" evidence="1">
    <location>
        <begin position="63"/>
        <end position="65"/>
    </location>
    <ligand>
        <name>NAD(+)</name>
        <dbReference type="ChEBI" id="CHEBI:57540"/>
    </ligand>
</feature>
<feature type="binding site" evidence="1">
    <location>
        <position position="91"/>
    </location>
    <ligand>
        <name>NAD(+)</name>
        <dbReference type="ChEBI" id="CHEBI:57540"/>
    </ligand>
</feature>
<feature type="binding site" evidence="1">
    <location>
        <position position="138"/>
    </location>
    <ligand>
        <name>substrate</name>
    </ligand>
</feature>
<feature type="binding site" evidence="1">
    <location>
        <position position="148"/>
    </location>
    <ligand>
        <name>substrate</name>
    </ligand>
</feature>
<feature type="binding site" evidence="1">
    <location>
        <begin position="151"/>
        <end position="155"/>
    </location>
    <ligand>
        <name>NAD(+)</name>
        <dbReference type="ChEBI" id="CHEBI:57540"/>
    </ligand>
</feature>
<feature type="binding site" evidence="1">
    <location>
        <begin position="186"/>
        <end position="188"/>
    </location>
    <ligand>
        <name>NAD(+)</name>
        <dbReference type="ChEBI" id="CHEBI:57540"/>
    </ligand>
</feature>
<accession>Q3T0C2</accession>